<reference key="1">
    <citation type="submission" date="2006-12" db="EMBL/GenBank/DDBJ databases">
        <authorList>
            <person name="Hendrix L."/>
            <person name="Mohamoud Y."/>
            <person name="Radune D."/>
            <person name="Shvartsbeyn A."/>
            <person name="Daugherty S."/>
            <person name="Dodson R."/>
            <person name="Durkin A.S."/>
            <person name="Harkins D."/>
            <person name="Huot H."/>
            <person name="Kothari S.P."/>
            <person name="Madupu R."/>
            <person name="Li J."/>
            <person name="Nelson W.C."/>
            <person name="Shrivastava S."/>
            <person name="Giglio M.G."/>
            <person name="Haft D."/>
            <person name="Selengut J."/>
            <person name="Fraser-Ligget C."/>
            <person name="Seshadri R."/>
        </authorList>
    </citation>
    <scope>NUCLEOTIDE SEQUENCE [LARGE SCALE GENOMIC DNA]</scope>
    <source>
        <strain>ATCC 35685 / KC583 / Herrer 020/F12,63</strain>
    </source>
</reference>
<feature type="chain" id="PRO_1000124605" description="Thiazole synthase">
    <location>
        <begin position="1"/>
        <end position="257"/>
    </location>
</feature>
<feature type="active site" description="Schiff-base intermediate with DXP" evidence="1">
    <location>
        <position position="96"/>
    </location>
</feature>
<feature type="binding site" evidence="1">
    <location>
        <position position="157"/>
    </location>
    <ligand>
        <name>1-deoxy-D-xylulose 5-phosphate</name>
        <dbReference type="ChEBI" id="CHEBI:57792"/>
    </ligand>
</feature>
<feature type="binding site" evidence="1">
    <location>
        <begin position="184"/>
        <end position="185"/>
    </location>
    <ligand>
        <name>1-deoxy-D-xylulose 5-phosphate</name>
        <dbReference type="ChEBI" id="CHEBI:57792"/>
    </ligand>
</feature>
<feature type="binding site" evidence="1">
    <location>
        <begin position="206"/>
        <end position="207"/>
    </location>
    <ligand>
        <name>1-deoxy-D-xylulose 5-phosphate</name>
        <dbReference type="ChEBI" id="CHEBI:57792"/>
    </ligand>
</feature>
<keyword id="KW-0963">Cytoplasm</keyword>
<keyword id="KW-0704">Schiff base</keyword>
<keyword id="KW-0784">Thiamine biosynthesis</keyword>
<keyword id="KW-0808">Transferase</keyword>
<comment type="function">
    <text evidence="1">Catalyzes the rearrangement of 1-deoxy-D-xylulose 5-phosphate (DXP) to produce the thiazole phosphate moiety of thiamine. Sulfur is provided by the thiocarboxylate moiety of the carrier protein ThiS. In vitro, sulfur can be provided by H(2)S.</text>
</comment>
<comment type="catalytic activity">
    <reaction evidence="1">
        <text>[ThiS sulfur-carrier protein]-C-terminal-Gly-aminoethanethioate + 2-iminoacetate + 1-deoxy-D-xylulose 5-phosphate = [ThiS sulfur-carrier protein]-C-terminal Gly-Gly + 2-[(2R,5Z)-2-carboxy-4-methylthiazol-5(2H)-ylidene]ethyl phosphate + 2 H2O + H(+)</text>
        <dbReference type="Rhea" id="RHEA:26297"/>
        <dbReference type="Rhea" id="RHEA-COMP:12909"/>
        <dbReference type="Rhea" id="RHEA-COMP:19908"/>
        <dbReference type="ChEBI" id="CHEBI:15377"/>
        <dbReference type="ChEBI" id="CHEBI:15378"/>
        <dbReference type="ChEBI" id="CHEBI:57792"/>
        <dbReference type="ChEBI" id="CHEBI:62899"/>
        <dbReference type="ChEBI" id="CHEBI:77846"/>
        <dbReference type="ChEBI" id="CHEBI:90778"/>
        <dbReference type="ChEBI" id="CHEBI:232372"/>
        <dbReference type="EC" id="2.8.1.10"/>
    </reaction>
</comment>
<comment type="pathway">
    <text evidence="1">Cofactor biosynthesis; thiamine diphosphate biosynthesis.</text>
</comment>
<comment type="subunit">
    <text evidence="1">Homotetramer. Forms heterodimers with either ThiH or ThiS.</text>
</comment>
<comment type="subcellular location">
    <subcellularLocation>
        <location evidence="1">Cytoplasm</location>
    </subcellularLocation>
</comment>
<comment type="similarity">
    <text evidence="1">Belongs to the ThiG family.</text>
</comment>
<protein>
    <recommendedName>
        <fullName evidence="1">Thiazole synthase</fullName>
        <ecNumber evidence="1">2.8.1.10</ecNumber>
    </recommendedName>
</protein>
<sequence>MLNFYGHEFSSRLLLGTAQYPSPEILRKVIDKSGTEIVTVSLRRETAGGKHSGQFWQFLKELNVTILPNTAGCYTIKEAVTTAQLARDLFKTPWIKLEVIGNPDTLQPNIFALVEAAQILNNEGFQIFAYTTDDLIVAEKLLEVGCRVIMPWCAPIGSAKGPRDTDGLRSIRAYLPDLTLVIDAGIGRPSHATIAMELGYDAILLNTAVAKSGDPVLMAEAFSKAVNAGYMAYKAGILEARDVAVPSTPIIGKAVFS</sequence>
<gene>
    <name evidence="1" type="primary">thiG</name>
    <name type="ordered locus">BARBAKC583_0443</name>
</gene>
<evidence type="ECO:0000255" key="1">
    <source>
        <dbReference type="HAMAP-Rule" id="MF_00443"/>
    </source>
</evidence>
<dbReference type="EC" id="2.8.1.10" evidence="1"/>
<dbReference type="EMBL" id="CP000524">
    <property type="protein sequence ID" value="ABM44577.1"/>
    <property type="molecule type" value="Genomic_DNA"/>
</dbReference>
<dbReference type="RefSeq" id="WP_005766487.1">
    <property type="nucleotide sequence ID" value="NC_008783.1"/>
</dbReference>
<dbReference type="SMR" id="A1US08"/>
<dbReference type="STRING" id="360095.BARBAKC583_0443"/>
<dbReference type="GeneID" id="4683880"/>
<dbReference type="KEGG" id="bbk:BARBAKC583_0443"/>
<dbReference type="PATRIC" id="fig|360095.6.peg.425"/>
<dbReference type="eggNOG" id="COG2022">
    <property type="taxonomic scope" value="Bacteria"/>
</dbReference>
<dbReference type="HOGENOM" id="CLU_062233_1_0_5"/>
<dbReference type="OrthoDB" id="9805935at2"/>
<dbReference type="UniPathway" id="UPA00060"/>
<dbReference type="Proteomes" id="UP000000643">
    <property type="component" value="Chromosome"/>
</dbReference>
<dbReference type="GO" id="GO:0005737">
    <property type="term" value="C:cytoplasm"/>
    <property type="evidence" value="ECO:0007669"/>
    <property type="project" value="UniProtKB-SubCell"/>
</dbReference>
<dbReference type="GO" id="GO:1990107">
    <property type="term" value="F:thiazole synthase activity"/>
    <property type="evidence" value="ECO:0007669"/>
    <property type="project" value="UniProtKB-EC"/>
</dbReference>
<dbReference type="GO" id="GO:0009229">
    <property type="term" value="P:thiamine diphosphate biosynthetic process"/>
    <property type="evidence" value="ECO:0007669"/>
    <property type="project" value="UniProtKB-UniRule"/>
</dbReference>
<dbReference type="CDD" id="cd04728">
    <property type="entry name" value="ThiG"/>
    <property type="match status" value="1"/>
</dbReference>
<dbReference type="Gene3D" id="3.20.20.70">
    <property type="entry name" value="Aldolase class I"/>
    <property type="match status" value="1"/>
</dbReference>
<dbReference type="HAMAP" id="MF_00443">
    <property type="entry name" value="ThiG"/>
    <property type="match status" value="1"/>
</dbReference>
<dbReference type="InterPro" id="IPR013785">
    <property type="entry name" value="Aldolase_TIM"/>
</dbReference>
<dbReference type="InterPro" id="IPR033983">
    <property type="entry name" value="Thiazole_synthase_ThiG"/>
</dbReference>
<dbReference type="InterPro" id="IPR008867">
    <property type="entry name" value="ThiG"/>
</dbReference>
<dbReference type="PANTHER" id="PTHR34266">
    <property type="entry name" value="THIAZOLE SYNTHASE"/>
    <property type="match status" value="1"/>
</dbReference>
<dbReference type="PANTHER" id="PTHR34266:SF2">
    <property type="entry name" value="THIAZOLE SYNTHASE"/>
    <property type="match status" value="1"/>
</dbReference>
<dbReference type="Pfam" id="PF05690">
    <property type="entry name" value="ThiG"/>
    <property type="match status" value="1"/>
</dbReference>
<dbReference type="SUPFAM" id="SSF110399">
    <property type="entry name" value="ThiG-like"/>
    <property type="match status" value="1"/>
</dbReference>
<name>THIG_BARBK</name>
<organism>
    <name type="scientific">Bartonella bacilliformis (strain ATCC 35685 / KC583 / Herrer 020/F12,63)</name>
    <dbReference type="NCBI Taxonomy" id="360095"/>
    <lineage>
        <taxon>Bacteria</taxon>
        <taxon>Pseudomonadati</taxon>
        <taxon>Pseudomonadota</taxon>
        <taxon>Alphaproteobacteria</taxon>
        <taxon>Hyphomicrobiales</taxon>
        <taxon>Bartonellaceae</taxon>
        <taxon>Bartonella</taxon>
    </lineage>
</organism>
<accession>A1US08</accession>
<proteinExistence type="inferred from homology"/>